<dbReference type="EMBL" id="BC083674">
    <property type="protein sequence ID" value="AAH83674.1"/>
    <property type="molecule type" value="mRNA"/>
</dbReference>
<dbReference type="RefSeq" id="NP_001014137.1">
    <property type="nucleotide sequence ID" value="NM_001014115.1"/>
</dbReference>
<dbReference type="RefSeq" id="XP_006245869.1">
    <property type="nucleotide sequence ID" value="XM_006245807.5"/>
</dbReference>
<dbReference type="RefSeq" id="XP_006245871.1">
    <property type="nucleotide sequence ID" value="XM_006245809.3"/>
</dbReference>
<dbReference type="RefSeq" id="XP_006245872.1">
    <property type="nucleotide sequence ID" value="XM_006245810.3"/>
</dbReference>
<dbReference type="RefSeq" id="XP_017452853.1">
    <property type="nucleotide sequence ID" value="XM_017597364.3"/>
</dbReference>
<dbReference type="RefSeq" id="XP_063125362.1">
    <property type="nucleotide sequence ID" value="XM_063269292.1"/>
</dbReference>
<dbReference type="RefSeq" id="XP_063125363.1">
    <property type="nucleotide sequence ID" value="XM_063269293.1"/>
</dbReference>
<dbReference type="FunCoup" id="Q5XIK6">
    <property type="interactions" value="80"/>
</dbReference>
<dbReference type="STRING" id="10116.ENSRNOP00000074365"/>
<dbReference type="iPTMnet" id="Q5XIK6"/>
<dbReference type="PhosphoSitePlus" id="Q5XIK6"/>
<dbReference type="PaxDb" id="10116-ENSRNOP00000037410"/>
<dbReference type="Ensembl" id="ENSRNOT00000036954.5">
    <property type="protein sequence ID" value="ENSRNOP00000037410.4"/>
    <property type="gene ID" value="ENSRNOG00000028075.6"/>
</dbReference>
<dbReference type="GeneID" id="360479"/>
<dbReference type="KEGG" id="rno:360479"/>
<dbReference type="UCSC" id="RGD:1359596">
    <property type="organism name" value="rat"/>
</dbReference>
<dbReference type="AGR" id="RGD:1359596"/>
<dbReference type="CTD" id="146562"/>
<dbReference type="RGD" id="1359596">
    <property type="gene designation" value="Dnaaf8"/>
</dbReference>
<dbReference type="eggNOG" id="ENOG502SAQ4">
    <property type="taxonomic scope" value="Eukaryota"/>
</dbReference>
<dbReference type="GeneTree" id="ENSGT00390000015381"/>
<dbReference type="InParanoid" id="Q5XIK6"/>
<dbReference type="OMA" id="GPGTVWW"/>
<dbReference type="OrthoDB" id="2162449at2759"/>
<dbReference type="PhylomeDB" id="Q5XIK6"/>
<dbReference type="TreeFam" id="TF336688"/>
<dbReference type="PRO" id="PR:Q5XIK6"/>
<dbReference type="Proteomes" id="UP000002494">
    <property type="component" value="Chromosome 10"/>
</dbReference>
<dbReference type="Bgee" id="ENSRNOG00000028075">
    <property type="expression patterns" value="Expressed in testis and 16 other cell types or tissues"/>
</dbReference>
<dbReference type="GO" id="GO:0005737">
    <property type="term" value="C:cytoplasm"/>
    <property type="evidence" value="ECO:0000250"/>
    <property type="project" value="UniProtKB"/>
</dbReference>
<dbReference type="GO" id="GO:0120293">
    <property type="term" value="C:dynein axonemal particle"/>
    <property type="evidence" value="ECO:0000250"/>
    <property type="project" value="UniProtKB"/>
</dbReference>
<dbReference type="GO" id="GO:0070840">
    <property type="term" value="F:dynein complex binding"/>
    <property type="evidence" value="ECO:0000250"/>
    <property type="project" value="UniProtKB"/>
</dbReference>
<dbReference type="GO" id="GO:0036158">
    <property type="term" value="P:outer dynein arm assembly"/>
    <property type="evidence" value="ECO:0000250"/>
    <property type="project" value="UniProtKB"/>
</dbReference>
<dbReference type="InterPro" id="IPR031531">
    <property type="entry name" value="DNAAF8"/>
</dbReference>
<dbReference type="PANTHER" id="PTHR35977">
    <property type="entry name" value="CHROMOSOME 16 OPEN READING FRAME 71"/>
    <property type="match status" value="1"/>
</dbReference>
<dbReference type="PANTHER" id="PTHR35977:SF1">
    <property type="entry name" value="DYNEIN AXONEMAL ASSEMBLY FACTOR 8"/>
    <property type="match status" value="1"/>
</dbReference>
<dbReference type="Pfam" id="PF15773">
    <property type="entry name" value="DAAP1"/>
    <property type="match status" value="1"/>
</dbReference>
<evidence type="ECO:0000250" key="1">
    <source>
        <dbReference type="UniProtKB" id="A0A1L8EYB2"/>
    </source>
</evidence>
<evidence type="ECO:0000250" key="2">
    <source>
        <dbReference type="UniProtKB" id="Q8IYS4"/>
    </source>
</evidence>
<evidence type="ECO:0000256" key="3">
    <source>
        <dbReference type="SAM" id="MobiDB-lite"/>
    </source>
</evidence>
<evidence type="ECO:0000305" key="4"/>
<evidence type="ECO:0007744" key="5">
    <source>
    </source>
</evidence>
<name>DAAF8_RAT</name>
<organism>
    <name type="scientific">Rattus norvegicus</name>
    <name type="common">Rat</name>
    <dbReference type="NCBI Taxonomy" id="10116"/>
    <lineage>
        <taxon>Eukaryota</taxon>
        <taxon>Metazoa</taxon>
        <taxon>Chordata</taxon>
        <taxon>Craniata</taxon>
        <taxon>Vertebrata</taxon>
        <taxon>Euteleostomi</taxon>
        <taxon>Mammalia</taxon>
        <taxon>Eutheria</taxon>
        <taxon>Euarchontoglires</taxon>
        <taxon>Glires</taxon>
        <taxon>Rodentia</taxon>
        <taxon>Myomorpha</taxon>
        <taxon>Muroidea</taxon>
        <taxon>Muridae</taxon>
        <taxon>Murinae</taxon>
        <taxon>Rattus</taxon>
    </lineage>
</organism>
<keyword id="KW-0963">Cytoplasm</keyword>
<keyword id="KW-0597">Phosphoprotein</keyword>
<keyword id="KW-1185">Reference proteome</keyword>
<accession>Q5XIK6</accession>
<proteinExistence type="evidence at protein level"/>
<feature type="chain" id="PRO_0000294347" description="Dynein axonemal assembly factor 8">
    <location>
        <begin position="1"/>
        <end position="481"/>
    </location>
</feature>
<feature type="region of interest" description="Disordered" evidence="3">
    <location>
        <begin position="70"/>
        <end position="91"/>
    </location>
</feature>
<feature type="region of interest" description="Disordered" evidence="3">
    <location>
        <begin position="131"/>
        <end position="233"/>
    </location>
</feature>
<feature type="region of interest" description="Disordered" evidence="3">
    <location>
        <begin position="306"/>
        <end position="397"/>
    </location>
</feature>
<feature type="region of interest" description="Disordered" evidence="3">
    <location>
        <begin position="415"/>
        <end position="454"/>
    </location>
</feature>
<feature type="compositionally biased region" description="Polar residues" evidence="3">
    <location>
        <begin position="144"/>
        <end position="155"/>
    </location>
</feature>
<feature type="compositionally biased region" description="Basic and acidic residues" evidence="3">
    <location>
        <begin position="163"/>
        <end position="176"/>
    </location>
</feature>
<feature type="compositionally biased region" description="Basic residues" evidence="3">
    <location>
        <begin position="177"/>
        <end position="188"/>
    </location>
</feature>
<feature type="compositionally biased region" description="Polar residues" evidence="3">
    <location>
        <begin position="198"/>
        <end position="211"/>
    </location>
</feature>
<feature type="compositionally biased region" description="Basic and acidic residues" evidence="3">
    <location>
        <begin position="310"/>
        <end position="322"/>
    </location>
</feature>
<feature type="compositionally biased region" description="Polar residues" evidence="3">
    <location>
        <begin position="323"/>
        <end position="336"/>
    </location>
</feature>
<feature type="compositionally biased region" description="Basic and acidic residues" evidence="3">
    <location>
        <begin position="337"/>
        <end position="349"/>
    </location>
</feature>
<feature type="compositionally biased region" description="Basic and acidic residues" evidence="3">
    <location>
        <begin position="359"/>
        <end position="380"/>
    </location>
</feature>
<feature type="modified residue" description="Phosphoserine" evidence="5">
    <location>
        <position position="83"/>
    </location>
</feature>
<feature type="modified residue" description="Phosphoserine" evidence="5">
    <location>
        <position position="145"/>
    </location>
</feature>
<feature type="modified residue" description="Phosphoserine" evidence="5">
    <location>
        <position position="147"/>
    </location>
</feature>
<feature type="modified residue" description="Phosphoserine" evidence="5">
    <location>
        <position position="328"/>
    </location>
</feature>
<sequence>MTSKDKAVVSLPVSPWDAILKAAKDQLPSLDSDSSLSDCEEEEPFIFQRNQPVLIPDLTEELAEDPVGVDESGTWVTAGRSPSPEPLLVPGRLAIEPRSEWMVRSKDLAHQERRGPGWSCQSCVKSSPILLDTKEAPAWPEGRGSQSPPWSSQGEGATFPLEGKLKTEPSDTDFKNSAKRRALRRERRKMIEREILQKVTQAAQNPASGDQGQVAELGPRPKATSEQSWEGRPVLSLKQLEGWDLDYILQSLPGQQGSQGDSASRSAWWLADRCQDQGHSTGPSQDILLEQLALLCATQSRVRHPTWKVSADKLQDTEEQVARTRSASAESGFQTERVQKRAESRRLKTEPPTVFLDLRLTEPSDPQEHQSQESSEHSSSDSEEEEVGSAGSIPVASSWEQRYCTGKSQLLQQLRAFRKGAVPPQLSAKDGPGGQKDQAQEDTGGSQTQRKKHIKLWAEKQNALNLGDPLGTRLLPGMGQL</sequence>
<reference key="1">
    <citation type="journal article" date="2004" name="Genome Res.">
        <title>The status, quality, and expansion of the NIH full-length cDNA project: the Mammalian Gene Collection (MGC).</title>
        <authorList>
            <consortium name="The MGC Project Team"/>
        </authorList>
    </citation>
    <scope>NUCLEOTIDE SEQUENCE [LARGE SCALE MRNA]</scope>
    <source>
        <tissue>Testis</tissue>
    </source>
</reference>
<reference key="2">
    <citation type="journal article" date="2012" name="Nat. Commun.">
        <title>Quantitative maps of protein phosphorylation sites across 14 different rat organs and tissues.</title>
        <authorList>
            <person name="Lundby A."/>
            <person name="Secher A."/>
            <person name="Lage K."/>
            <person name="Nordsborg N.B."/>
            <person name="Dmytriyev A."/>
            <person name="Lundby C."/>
            <person name="Olsen J.V."/>
        </authorList>
    </citation>
    <scope>PHOSPHORYLATION [LARGE SCALE ANALYSIS] AT SER-83; SER-145; SER-147 AND SER-328</scope>
    <scope>IDENTIFICATION BY MASS SPECTROMETRY [LARGE SCALE ANALYSIS]</scope>
</reference>
<gene>
    <name type="primary">Dnaaf8</name>
    <name evidence="2" type="synonym">Daap1</name>
</gene>
<comment type="function">
    <text evidence="1">In cyliated cells, dynein axonemal particle-specific protein required for deployment of ODA to the axoneme. Interacts with outer dynein arm (ODA) subunits.</text>
</comment>
<comment type="subcellular location">
    <subcellularLocation>
        <location evidence="2">Dynein axonemal particle</location>
    </subcellularLocation>
    <subcellularLocation>
        <location evidence="2">Cytoplasm</location>
    </subcellularLocation>
</comment>
<protein>
    <recommendedName>
        <fullName evidence="4">Dynein axonemal assembly factor 8</fullName>
    </recommendedName>
    <alternativeName>
        <fullName evidence="4">Dynein axonemal-associated protein 1</fullName>
    </alternativeName>
    <alternativeName>
        <fullName>Uncharacterized protein C16orf71 homolog</fullName>
    </alternativeName>
</protein>